<organism>
    <name type="scientific">Escherichia coli O157:H7</name>
    <dbReference type="NCBI Taxonomy" id="83334"/>
    <lineage>
        <taxon>Bacteria</taxon>
        <taxon>Pseudomonadati</taxon>
        <taxon>Pseudomonadota</taxon>
        <taxon>Gammaproteobacteria</taxon>
        <taxon>Enterobacterales</taxon>
        <taxon>Enterobacteriaceae</taxon>
        <taxon>Escherichia</taxon>
    </lineage>
</organism>
<sequence length="428" mass="45716">MSEDIFDAIIVGAGLAGSVAALVLAREGAQVLVIERGNSAGAKNVTGGRLYAHSLEHIIPGFAESAPVERLITHEKLAFMTEKSAMTMDYCNGDETSPSQRSYSVLRSKFDAWLMEQAEEAGAQLITGIRVDNLVQRDGKVVGVEADGDVIEAKTVILADGVNSILAEKLGMAKRVKPTNVAVGVKELIELPKSVIEDRFQLQGNQGAACLFAGSPTDGLMGGGFLYTNENTLSLGLVCGLHHLHDAKKSVPQMLEDFKQHPAVAPLIAGGKLVEYSAHVVPEAGINMLPELVGDGVLIAGDAAGMCMNLGFTIRGMDLAIAAGEAAAKTVLSAMKSDDFSKQKLAEYRQHLESGPLRDMRMYQKLPAFLDNPRMFSGYPELAVGVARDLFTIDGSAPELMRKKILRHGKKVGFINLIKDGMKGVTVL</sequence>
<keyword id="KW-0249">Electron transport</keyword>
<keyword id="KW-0274">FAD</keyword>
<keyword id="KW-0285">Flavoprotein</keyword>
<keyword id="KW-0560">Oxidoreductase</keyword>
<keyword id="KW-1185">Reference proteome</keyword>
<keyword id="KW-0813">Transport</keyword>
<reference key="1">
    <citation type="journal article" date="2001" name="Nature">
        <title>Genome sequence of enterohaemorrhagic Escherichia coli O157:H7.</title>
        <authorList>
            <person name="Perna N.T."/>
            <person name="Plunkett G. III"/>
            <person name="Burland V."/>
            <person name="Mau B."/>
            <person name="Glasner J.D."/>
            <person name="Rose D.J."/>
            <person name="Mayhew G.F."/>
            <person name="Evans P.S."/>
            <person name="Gregor J."/>
            <person name="Kirkpatrick H.A."/>
            <person name="Posfai G."/>
            <person name="Hackett J."/>
            <person name="Klink S."/>
            <person name="Boutin A."/>
            <person name="Shao Y."/>
            <person name="Miller L."/>
            <person name="Grotbeck E.J."/>
            <person name="Davis N.W."/>
            <person name="Lim A."/>
            <person name="Dimalanta E.T."/>
            <person name="Potamousis K."/>
            <person name="Apodaca J."/>
            <person name="Anantharaman T.S."/>
            <person name="Lin J."/>
            <person name="Yen G."/>
            <person name="Schwartz D.C."/>
            <person name="Welch R.A."/>
            <person name="Blattner F.R."/>
        </authorList>
    </citation>
    <scope>NUCLEOTIDE SEQUENCE [LARGE SCALE GENOMIC DNA]</scope>
    <source>
        <strain>O157:H7 / EDL933 / ATCC 700927 / EHEC</strain>
    </source>
</reference>
<reference key="2">
    <citation type="journal article" date="2001" name="DNA Res.">
        <title>Complete genome sequence of enterohemorrhagic Escherichia coli O157:H7 and genomic comparison with a laboratory strain K-12.</title>
        <authorList>
            <person name="Hayashi T."/>
            <person name="Makino K."/>
            <person name="Ohnishi M."/>
            <person name="Kurokawa K."/>
            <person name="Ishii K."/>
            <person name="Yokoyama K."/>
            <person name="Han C.-G."/>
            <person name="Ohtsubo E."/>
            <person name="Nakayama K."/>
            <person name="Murata T."/>
            <person name="Tanaka M."/>
            <person name="Tobe T."/>
            <person name="Iida T."/>
            <person name="Takami H."/>
            <person name="Honda T."/>
            <person name="Sasakawa C."/>
            <person name="Ogasawara N."/>
            <person name="Yasunaga T."/>
            <person name="Kuhara S."/>
            <person name="Shiba T."/>
            <person name="Hattori M."/>
            <person name="Shinagawa H."/>
        </authorList>
    </citation>
    <scope>NUCLEOTIDE SEQUENCE [LARGE SCALE GENOMIC DNA]</scope>
    <source>
        <strain>O157:H7 / Sakai / RIMD 0509952 / EHEC</strain>
    </source>
</reference>
<accession>Q7AHT0</accession>
<accession>Q8XA26</accession>
<dbReference type="EMBL" id="AE005174">
    <property type="protein sequence ID" value="AAG54346.1"/>
    <property type="molecule type" value="Genomic_DNA"/>
</dbReference>
<dbReference type="EMBL" id="BA000007">
    <property type="protein sequence ID" value="BAB33469.1"/>
    <property type="molecule type" value="Genomic_DNA"/>
</dbReference>
<dbReference type="PIR" id="F85485">
    <property type="entry name" value="F85485"/>
</dbReference>
<dbReference type="PIR" id="F90634">
    <property type="entry name" value="F90634"/>
</dbReference>
<dbReference type="RefSeq" id="WP_001287748.1">
    <property type="nucleotide sequence ID" value="NZ_VOAI01000002.1"/>
</dbReference>
<dbReference type="SMR" id="Q7AHT0"/>
<dbReference type="STRING" id="155864.Z0049"/>
<dbReference type="KEGG" id="ece:Z0049"/>
<dbReference type="KEGG" id="ecs:ECs_0046"/>
<dbReference type="PATRIC" id="fig|386585.9.peg.145"/>
<dbReference type="eggNOG" id="COG0644">
    <property type="taxonomic scope" value="Bacteria"/>
</dbReference>
<dbReference type="HOGENOM" id="CLU_050977_0_0_6"/>
<dbReference type="OMA" id="KPNRYTI"/>
<dbReference type="Proteomes" id="UP000000558">
    <property type="component" value="Chromosome"/>
</dbReference>
<dbReference type="Proteomes" id="UP000002519">
    <property type="component" value="Chromosome"/>
</dbReference>
<dbReference type="GO" id="GO:0071949">
    <property type="term" value="F:FAD binding"/>
    <property type="evidence" value="ECO:0007669"/>
    <property type="project" value="InterPro"/>
</dbReference>
<dbReference type="GO" id="GO:0016491">
    <property type="term" value="F:oxidoreductase activity"/>
    <property type="evidence" value="ECO:0007669"/>
    <property type="project" value="UniProtKB-KW"/>
</dbReference>
<dbReference type="FunFam" id="3.50.50.60:FF:000120">
    <property type="entry name" value="Putative oxidoreductase FixC"/>
    <property type="match status" value="1"/>
</dbReference>
<dbReference type="Gene3D" id="3.50.50.60">
    <property type="entry name" value="FAD/NAD(P)-binding domain"/>
    <property type="match status" value="1"/>
</dbReference>
<dbReference type="InterPro" id="IPR002938">
    <property type="entry name" value="FAD-bd"/>
</dbReference>
<dbReference type="InterPro" id="IPR036188">
    <property type="entry name" value="FAD/NAD-bd_sf"/>
</dbReference>
<dbReference type="InterPro" id="IPR039651">
    <property type="entry name" value="FixC-like"/>
</dbReference>
<dbReference type="NCBIfam" id="NF007450">
    <property type="entry name" value="PRK10015.1"/>
    <property type="match status" value="1"/>
</dbReference>
<dbReference type="NCBIfam" id="NF007542">
    <property type="entry name" value="PRK10157.1"/>
    <property type="match status" value="1"/>
</dbReference>
<dbReference type="PANTHER" id="PTHR43624">
    <property type="entry name" value="ELECTRON TRANSFER FLAVOPROTEIN-QUINONE OXIDOREDUCTASE YDIS-RELATED"/>
    <property type="match status" value="1"/>
</dbReference>
<dbReference type="PANTHER" id="PTHR43624:SF1">
    <property type="entry name" value="PROTEIN FIXC"/>
    <property type="match status" value="1"/>
</dbReference>
<dbReference type="Pfam" id="PF01494">
    <property type="entry name" value="FAD_binding_3"/>
    <property type="match status" value="1"/>
</dbReference>
<dbReference type="PRINTS" id="PR00420">
    <property type="entry name" value="RNGMNOXGNASE"/>
</dbReference>
<dbReference type="SUPFAM" id="SSF54373">
    <property type="entry name" value="FAD-linked reductases, C-terminal domain"/>
    <property type="match status" value="1"/>
</dbReference>
<dbReference type="SUPFAM" id="SSF51905">
    <property type="entry name" value="FAD/NAD(P)-binding domain"/>
    <property type="match status" value="1"/>
</dbReference>
<feature type="chain" id="PRO_0000200692" description="Protein FixC">
    <location>
        <begin position="1"/>
        <end position="428"/>
    </location>
</feature>
<comment type="function">
    <text evidence="1">Could be part of an electron transfer system required for anaerobic carnitine reduction.</text>
</comment>
<comment type="cofactor">
    <cofactor evidence="2">
        <name>FAD</name>
        <dbReference type="ChEBI" id="CHEBI:57692"/>
    </cofactor>
</comment>
<comment type="similarity">
    <text evidence="2">Belongs to the ETF-QO/FixC family.</text>
</comment>
<evidence type="ECO:0000250" key="1"/>
<evidence type="ECO:0000305" key="2"/>
<gene>
    <name type="primary">fixC</name>
    <name type="ordered locus">Z0049</name>
    <name type="ordered locus">ECs0046</name>
</gene>
<protein>
    <recommendedName>
        <fullName>Protein FixC</fullName>
    </recommendedName>
</protein>
<proteinExistence type="inferred from homology"/>
<name>FIXC_ECO57</name>